<feature type="chain" id="PRO_0000433627" description="Homeobox protein NANOG">
    <location>
        <begin position="1"/>
        <end position="309"/>
    </location>
</feature>
<feature type="DNA-binding region" description="Homeobox" evidence="2">
    <location>
        <begin position="98"/>
        <end position="157"/>
    </location>
</feature>
<feature type="region of interest" description="Disordered" evidence="3">
    <location>
        <begin position="24"/>
        <end position="104"/>
    </location>
</feature>
<feature type="compositionally biased region" description="Low complexity" evidence="3">
    <location>
        <begin position="25"/>
        <end position="41"/>
    </location>
</feature>
<feature type="compositionally biased region" description="Polar residues" evidence="3">
    <location>
        <begin position="55"/>
        <end position="75"/>
    </location>
</feature>
<feature type="compositionally biased region" description="Basic and acidic residues" evidence="3">
    <location>
        <begin position="87"/>
        <end position="96"/>
    </location>
</feature>
<feature type="sequence conflict" description="In Ref. 1; ABK27429." evidence="6" ref="1">
    <original>T</original>
    <variation>A</variation>
    <location>
        <position position="194"/>
    </location>
</feature>
<dbReference type="EMBL" id="DQ867025">
    <property type="protein sequence ID" value="ABK27429.1"/>
    <property type="molecule type" value="mRNA"/>
</dbReference>
<dbReference type="EMBL" id="AADN03000707">
    <property type="status" value="NOT_ANNOTATED_CDS"/>
    <property type="molecule type" value="Genomic_DNA"/>
</dbReference>
<dbReference type="RefSeq" id="NP_001139614.1">
    <property type="nucleotide sequence ID" value="NM_001146142.1"/>
</dbReference>
<dbReference type="SMR" id="A7Y7W3"/>
<dbReference type="FunCoup" id="A7Y7W3">
    <property type="interactions" value="234"/>
</dbReference>
<dbReference type="STRING" id="9031.ENSGALP00000043037"/>
<dbReference type="PaxDb" id="9031-ENSGALP00000043037"/>
<dbReference type="GeneID" id="100272166"/>
<dbReference type="KEGG" id="gga:100272166"/>
<dbReference type="CTD" id="79923"/>
<dbReference type="VEuPathDB" id="HostDB:geneid_100272166"/>
<dbReference type="eggNOG" id="KOG0491">
    <property type="taxonomic scope" value="Eukaryota"/>
</dbReference>
<dbReference type="InParanoid" id="A7Y7W3"/>
<dbReference type="OrthoDB" id="6159439at2759"/>
<dbReference type="PRO" id="PR:A7Y7W3"/>
<dbReference type="Proteomes" id="UP000000539">
    <property type="component" value="Unassembled WGS sequence"/>
</dbReference>
<dbReference type="GO" id="GO:0005634">
    <property type="term" value="C:nucleus"/>
    <property type="evidence" value="ECO:0000314"/>
    <property type="project" value="AgBase"/>
</dbReference>
<dbReference type="GO" id="GO:0000981">
    <property type="term" value="F:DNA-binding transcription factor activity, RNA polymerase II-specific"/>
    <property type="evidence" value="ECO:0000318"/>
    <property type="project" value="GO_Central"/>
</dbReference>
<dbReference type="GO" id="GO:0000978">
    <property type="term" value="F:RNA polymerase II cis-regulatory region sequence-specific DNA binding"/>
    <property type="evidence" value="ECO:0000318"/>
    <property type="project" value="GO_Central"/>
</dbReference>
<dbReference type="GO" id="GO:0000976">
    <property type="term" value="F:transcription cis-regulatory region binding"/>
    <property type="evidence" value="ECO:0000250"/>
    <property type="project" value="UniProtKB"/>
</dbReference>
<dbReference type="GO" id="GO:0030154">
    <property type="term" value="P:cell differentiation"/>
    <property type="evidence" value="ECO:0000318"/>
    <property type="project" value="GO_Central"/>
</dbReference>
<dbReference type="GO" id="GO:1902459">
    <property type="term" value="P:positive regulation of stem cell population maintenance"/>
    <property type="evidence" value="ECO:0000315"/>
    <property type="project" value="UniProtKB"/>
</dbReference>
<dbReference type="GO" id="GO:0006357">
    <property type="term" value="P:regulation of transcription by RNA polymerase II"/>
    <property type="evidence" value="ECO:0000318"/>
    <property type="project" value="GO_Central"/>
</dbReference>
<dbReference type="GO" id="GO:0019827">
    <property type="term" value="P:stem cell population maintenance"/>
    <property type="evidence" value="ECO:0000250"/>
    <property type="project" value="UniProtKB"/>
</dbReference>
<dbReference type="CDD" id="cd00086">
    <property type="entry name" value="homeodomain"/>
    <property type="match status" value="1"/>
</dbReference>
<dbReference type="FunFam" id="1.10.10.60:FF:000774">
    <property type="entry name" value="Homeobox protein NANOG"/>
    <property type="match status" value="1"/>
</dbReference>
<dbReference type="Gene3D" id="1.10.10.60">
    <property type="entry name" value="Homeodomain-like"/>
    <property type="match status" value="1"/>
</dbReference>
<dbReference type="InterPro" id="IPR050460">
    <property type="entry name" value="Distal-less_Homeobox_TF"/>
</dbReference>
<dbReference type="InterPro" id="IPR001356">
    <property type="entry name" value="HD"/>
</dbReference>
<dbReference type="InterPro" id="IPR017970">
    <property type="entry name" value="Homeobox_CS"/>
</dbReference>
<dbReference type="InterPro" id="IPR009057">
    <property type="entry name" value="Homeodomain-like_sf"/>
</dbReference>
<dbReference type="PANTHER" id="PTHR24327">
    <property type="entry name" value="HOMEOBOX PROTEIN"/>
    <property type="match status" value="1"/>
</dbReference>
<dbReference type="PANTHER" id="PTHR24327:SF72">
    <property type="entry name" value="HOMEOBOX PROTEIN NANOG"/>
    <property type="match status" value="1"/>
</dbReference>
<dbReference type="Pfam" id="PF00046">
    <property type="entry name" value="Homeodomain"/>
    <property type="match status" value="1"/>
</dbReference>
<dbReference type="SMART" id="SM00389">
    <property type="entry name" value="HOX"/>
    <property type="match status" value="1"/>
</dbReference>
<dbReference type="SUPFAM" id="SSF46689">
    <property type="entry name" value="Homeodomain-like"/>
    <property type="match status" value="1"/>
</dbReference>
<dbReference type="PROSITE" id="PS00027">
    <property type="entry name" value="HOMEOBOX_1"/>
    <property type="match status" value="1"/>
</dbReference>
<dbReference type="PROSITE" id="PS50071">
    <property type="entry name" value="HOMEOBOX_2"/>
    <property type="match status" value="1"/>
</dbReference>
<keyword id="KW-0238">DNA-binding</keyword>
<keyword id="KW-0371">Homeobox</keyword>
<keyword id="KW-0539">Nucleus</keyword>
<keyword id="KW-1185">Reference proteome</keyword>
<keyword id="KW-0804">Transcription</keyword>
<keyword id="KW-0805">Transcription regulation</keyword>
<name>NANOG_CHICK</name>
<protein>
    <recommendedName>
        <fullName>Homeobox protein NANOG</fullName>
    </recommendedName>
    <alternativeName>
        <fullName>Homeobox transcription factor Nanog</fullName>
        <shortName>cNanog</shortName>
    </alternativeName>
</protein>
<comment type="function">
    <text evidence="1 4">Transcription factor required for the maintenance of pluripotency and self-renewal of embryonic stem cells.</text>
</comment>
<comment type="subcellular location">
    <subcellularLocation>
        <location evidence="5">Nucleus</location>
    </subcellularLocation>
</comment>
<comment type="developmental stage">
    <text evidence="4 5">During embryonic development, expressed preferentially in epiblastic cells and germ cells. In pre-streak embryos, detected in the whole epiblast, but not in the forming hypoblast (stages XI through XIII) (at protein level). As the primitive streak starts to form, disappears from the primitive streak epiblast, but still expressed throughout the area pellucida epiblast (stage XIV -&gt; 3+). At the end of gastrulation (stage 4+), quickly decreases in the epiblast and persists in a crescent anterior to the emerging head process (stages 4+ through 6). At stage 5, strongly expressed in some of the cells in the germinal crescent, probably corresponding primordial germ cells. At stage 7 (neurula stage), undetectable in differentiated cells (at protein level). As the neural plate forms (stages 6-8), expression in the epiblast is restricted to the anterior neural plate. At stage 33, still expressed in germ cells. At stages 42-43, expressed in gonads, as well as in brain, kidney and heart, but at much lower levels than in proliferating embryonic stem cells.</text>
</comment>
<comment type="induction">
    <text evidence="4">Strongly down-regulated during embryonic stem cell differentiation, induced either by retinoic acid treatment, or by cell adhesion prevention leading to embryoid body formation.</text>
</comment>
<comment type="similarity">
    <text evidence="6">Belongs to the Nanog homeobox family.</text>
</comment>
<reference key="1">
    <citation type="journal article" date="2007" name="Development">
        <title>The Oct4 homologue PouV and Nanog regulate pluripotency in chicken embryonic stem cells.</title>
        <authorList>
            <person name="Lavial F."/>
            <person name="Acloque H."/>
            <person name="Bertocchini F."/>
            <person name="MacLeod D.J."/>
            <person name="Boast S."/>
            <person name="Bachelard E."/>
            <person name="Montillet G."/>
            <person name="Thenot S."/>
            <person name="Sang H.M."/>
            <person name="Stern C.D."/>
            <person name="Samarut J."/>
            <person name="Pain B."/>
        </authorList>
    </citation>
    <scope>NUCLEOTIDE SEQUENCE [MRNA]</scope>
    <scope>FUNCTION</scope>
    <scope>DEVELOPMENTAL STAGE</scope>
    <scope>INDUCTION</scope>
</reference>
<reference key="2">
    <citation type="journal article" date="2004" name="Nature">
        <title>Sequence and comparative analysis of the chicken genome provide unique perspectives on vertebrate evolution.</title>
        <authorList>
            <person name="Hillier L.W."/>
            <person name="Miller W."/>
            <person name="Birney E."/>
            <person name="Warren W."/>
            <person name="Hardison R.C."/>
            <person name="Ponting C.P."/>
            <person name="Bork P."/>
            <person name="Burt D.W."/>
            <person name="Groenen M.A.M."/>
            <person name="Delany M.E."/>
            <person name="Dodgson J.B."/>
            <person name="Chinwalla A.T."/>
            <person name="Cliften P.F."/>
            <person name="Clifton S.W."/>
            <person name="Delehaunty K.D."/>
            <person name="Fronick C."/>
            <person name="Fulton R.S."/>
            <person name="Graves T.A."/>
            <person name="Kremitzki C."/>
            <person name="Layman D."/>
            <person name="Magrini V."/>
            <person name="McPherson J.D."/>
            <person name="Miner T.L."/>
            <person name="Minx P."/>
            <person name="Nash W.E."/>
            <person name="Nhan M.N."/>
            <person name="Nelson J.O."/>
            <person name="Oddy L.G."/>
            <person name="Pohl C.S."/>
            <person name="Randall-Maher J."/>
            <person name="Smith S.M."/>
            <person name="Wallis J.W."/>
            <person name="Yang S.-P."/>
            <person name="Romanov M.N."/>
            <person name="Rondelli C.M."/>
            <person name="Paton B."/>
            <person name="Smith J."/>
            <person name="Morrice D."/>
            <person name="Daniels L."/>
            <person name="Tempest H.G."/>
            <person name="Robertson L."/>
            <person name="Masabanda J.S."/>
            <person name="Griffin D.K."/>
            <person name="Vignal A."/>
            <person name="Fillon V."/>
            <person name="Jacobbson L."/>
            <person name="Kerje S."/>
            <person name="Andersson L."/>
            <person name="Crooijmans R.P."/>
            <person name="Aerts J."/>
            <person name="van der Poel J.J."/>
            <person name="Ellegren H."/>
            <person name="Caldwell R.B."/>
            <person name="Hubbard S.J."/>
            <person name="Grafham D.V."/>
            <person name="Kierzek A.M."/>
            <person name="McLaren S.R."/>
            <person name="Overton I.M."/>
            <person name="Arakawa H."/>
            <person name="Beattie K.J."/>
            <person name="Bezzubov Y."/>
            <person name="Boardman P.E."/>
            <person name="Bonfield J.K."/>
            <person name="Croning M.D.R."/>
            <person name="Davies R.M."/>
            <person name="Francis M.D."/>
            <person name="Humphray S.J."/>
            <person name="Scott C.E."/>
            <person name="Taylor R.G."/>
            <person name="Tickle C."/>
            <person name="Brown W.R.A."/>
            <person name="Rogers J."/>
            <person name="Buerstedde J.-M."/>
            <person name="Wilson S.A."/>
            <person name="Stubbs L."/>
            <person name="Ovcharenko I."/>
            <person name="Gordon L."/>
            <person name="Lucas S."/>
            <person name="Miller M.M."/>
            <person name="Inoko H."/>
            <person name="Shiina T."/>
            <person name="Kaufman J."/>
            <person name="Salomonsen J."/>
            <person name="Skjoedt K."/>
            <person name="Wong G.K.-S."/>
            <person name="Wang J."/>
            <person name="Liu B."/>
            <person name="Wang J."/>
            <person name="Yu J."/>
            <person name="Yang H."/>
            <person name="Nefedov M."/>
            <person name="Koriabine M."/>
            <person name="Dejong P.J."/>
            <person name="Goodstadt L."/>
            <person name="Webber C."/>
            <person name="Dickens N.J."/>
            <person name="Letunic I."/>
            <person name="Suyama M."/>
            <person name="Torrents D."/>
            <person name="von Mering C."/>
            <person name="Zdobnov E.M."/>
            <person name="Makova K."/>
            <person name="Nekrutenko A."/>
            <person name="Elnitski L."/>
            <person name="Eswara P."/>
            <person name="King D.C."/>
            <person name="Yang S.-P."/>
            <person name="Tyekucheva S."/>
            <person name="Radakrishnan A."/>
            <person name="Harris R.S."/>
            <person name="Chiaromonte F."/>
            <person name="Taylor J."/>
            <person name="He J."/>
            <person name="Rijnkels M."/>
            <person name="Griffiths-Jones S."/>
            <person name="Ureta-Vidal A."/>
            <person name="Hoffman M.M."/>
            <person name="Severin J."/>
            <person name="Searle S.M.J."/>
            <person name="Law A.S."/>
            <person name="Speed D."/>
            <person name="Waddington D."/>
            <person name="Cheng Z."/>
            <person name="Tuzun E."/>
            <person name="Eichler E."/>
            <person name="Bao Z."/>
            <person name="Flicek P."/>
            <person name="Shteynberg D.D."/>
            <person name="Brent M.R."/>
            <person name="Bye J.M."/>
            <person name="Huckle E.J."/>
            <person name="Chatterji S."/>
            <person name="Dewey C."/>
            <person name="Pachter L."/>
            <person name="Kouranov A."/>
            <person name="Mourelatos Z."/>
            <person name="Hatzigeorgiou A.G."/>
            <person name="Paterson A.H."/>
            <person name="Ivarie R."/>
            <person name="Brandstrom M."/>
            <person name="Axelsson E."/>
            <person name="Backstrom N."/>
            <person name="Berlin S."/>
            <person name="Webster M.T."/>
            <person name="Pourquie O."/>
            <person name="Reymond A."/>
            <person name="Ucla C."/>
            <person name="Antonarakis S.E."/>
            <person name="Long M."/>
            <person name="Emerson J.J."/>
            <person name="Betran E."/>
            <person name="Dupanloup I."/>
            <person name="Kaessmann H."/>
            <person name="Hinrichs A.S."/>
            <person name="Bejerano G."/>
            <person name="Furey T.S."/>
            <person name="Harte R.A."/>
            <person name="Raney B."/>
            <person name="Siepel A."/>
            <person name="Kent W.J."/>
            <person name="Haussler D."/>
            <person name="Eyras E."/>
            <person name="Castelo R."/>
            <person name="Abril J.F."/>
            <person name="Castellano S."/>
            <person name="Camara F."/>
            <person name="Parra G."/>
            <person name="Guigo R."/>
            <person name="Bourque G."/>
            <person name="Tesler G."/>
            <person name="Pevzner P.A."/>
            <person name="Smit A."/>
            <person name="Fulton L.A."/>
            <person name="Mardis E.R."/>
            <person name="Wilson R.K."/>
        </authorList>
    </citation>
    <scope>NUCLEOTIDE SEQUENCE [LARGE SCALE GENOMIC DNA]</scope>
    <source>
        <strain>Red jungle fowl</strain>
    </source>
</reference>
<reference key="3">
    <citation type="journal article" date="2015" name="Dev. Growth Differ.">
        <title>Verification of chicken Nanog as an epiblast marker and identification of chicken PouV as Pou5f3 by newly raised antibodies.</title>
        <authorList>
            <person name="Nakanoh S."/>
            <person name="Fuse N."/>
            <person name="Takahashi Y."/>
            <person name="Agata K."/>
        </authorList>
    </citation>
    <scope>SUBCELLULAR LOCATION</scope>
    <scope>DEVELOPMENTAL STAGE</scope>
</reference>
<organism evidence="7">
    <name type="scientific">Gallus gallus</name>
    <name type="common">Chicken</name>
    <dbReference type="NCBI Taxonomy" id="9031"/>
    <lineage>
        <taxon>Eukaryota</taxon>
        <taxon>Metazoa</taxon>
        <taxon>Chordata</taxon>
        <taxon>Craniata</taxon>
        <taxon>Vertebrata</taxon>
        <taxon>Euteleostomi</taxon>
        <taxon>Archelosauria</taxon>
        <taxon>Archosauria</taxon>
        <taxon>Dinosauria</taxon>
        <taxon>Saurischia</taxon>
        <taxon>Theropoda</taxon>
        <taxon>Coelurosauria</taxon>
        <taxon>Aves</taxon>
        <taxon>Neognathae</taxon>
        <taxon>Galloanserae</taxon>
        <taxon>Galliformes</taxon>
        <taxon>Phasianidae</taxon>
        <taxon>Phasianinae</taxon>
        <taxon>Gallus</taxon>
    </lineage>
</organism>
<evidence type="ECO:0000250" key="1">
    <source>
        <dbReference type="UniProtKB" id="Q9H9S0"/>
    </source>
</evidence>
<evidence type="ECO:0000255" key="2">
    <source>
        <dbReference type="PROSITE-ProRule" id="PRU00108"/>
    </source>
</evidence>
<evidence type="ECO:0000256" key="3">
    <source>
        <dbReference type="SAM" id="MobiDB-lite"/>
    </source>
</evidence>
<evidence type="ECO:0000269" key="4">
    <source>
    </source>
</evidence>
<evidence type="ECO:0000269" key="5">
    <source>
    </source>
</evidence>
<evidence type="ECO:0000305" key="6"/>
<evidence type="ECO:0000312" key="7">
    <source>
        <dbReference type="EMBL" id="ABK27429.1"/>
    </source>
</evidence>
<proteinExistence type="evidence at protein level"/>
<sequence length="309" mass="34310">MSAHLAMPSYGSVRCGHYYWPSPGSMDSASAAEAPAADLSLTTEQKTPCHPDASPASSSSGTLIQYTPDSATSPTADHPSHRPTFQKVKDKGESGTRKAKSRTAFSQEQLQTLHQRFQSQKYLSPHQIRELAAALGLTYKQVKTWFQNQRMKFKRCQKESQWVDKGIYLPQNGFHQAAYLDMTPTFHQGFPVVTNRNLQAVTSAHQAYSSGQTYGNGQGLYPFMAVEDEGFFGKGGTSCNTQQAMGLLSQQMNFYHGYSTNVDYDSLQAEDTYSFQSTSDSITQFSSSPVRHQYQAPWHTLGTQNGYET</sequence>
<gene>
    <name type="primary">NANOG</name>
</gene>
<accession>A7Y7W3</accession>
<accession>R4GLF7</accession>